<reference key="1">
    <citation type="journal article" date="1992" name="Appl. Environ. Microbiol.">
        <title>Cyclization characteristics of cyclodextrin glucanotransferase are conferred by the NH2-terminal region of the enzyme.</title>
        <authorList>
            <person name="Fujiwara S."/>
            <person name="Kakihara H."/>
            <person name="Woo K.B."/>
            <person name="Lejeune A."/>
            <person name="Kanemoto M."/>
            <person name="Sakaguchi K."/>
            <person name="Imanaka T."/>
        </authorList>
    </citation>
    <scope>NUCLEOTIDE SEQUENCE [GENOMIC DNA]</scope>
    <source>
        <strain>NO. 2</strain>
    </source>
</reference>
<reference key="2">
    <citation type="patent" date="1986-07-23" number="GB2169902">
        <title>Polypeptide possessing cyclomaltodextrin glucanotransferase activity.</title>
        <authorList>
            <person name="Sugimoto T."/>
            <person name="Kubota M."/>
            <person name="Sakai S."/>
        </authorList>
    </citation>
    <scope>NUCLEOTIDE SEQUENCE [GENOMIC DNA]</scope>
    <scope>PROTEIN SEQUENCE OF 32-41</scope>
</reference>
<reference key="3">
    <citation type="submission" date="1993-02" db="PDB data bank">
        <authorList>
            <person name="Kubota M."/>
            <person name="Matsuura Y."/>
            <person name="Sakai S."/>
            <person name="Katsube Y."/>
        </authorList>
    </citation>
    <scope>X-RAY CRYSTALLOGRAPHY (2.5 ANGSTROMS) IN COMPLEX WITH CALCIUM IONS</scope>
</reference>
<comment type="catalytic activity">
    <reaction>
        <text>Cyclizes part of a (1-&gt;4)-alpha-D-glucan chain by formation of a (1-&gt;4)-alpha-D-glucosidic bond.</text>
        <dbReference type="EC" id="2.4.1.19"/>
    </reaction>
</comment>
<comment type="cofactor">
    <cofactor>
        <name>Ca(2+)</name>
        <dbReference type="ChEBI" id="CHEBI:29108"/>
    </cofactor>
    <text>Binds 2 calcium ions per subunit.</text>
</comment>
<comment type="subunit">
    <text evidence="4">Monomer.</text>
</comment>
<comment type="subcellular location">
    <subcellularLocation>
        <location evidence="1">Secreted</location>
    </subcellularLocation>
</comment>
<comment type="domain">
    <text>May consist of two protein domains: the one in the N-terminal side cleaves the alpha-1,4-glucosidic bond in starch, and the other in the C-terminal side catalyzes other activities, including the reconstitution of an alpha-1,4-glucosidic linkage for cyclizing the maltooligosaccharide produced.</text>
</comment>
<comment type="similarity">
    <text evidence="5">Belongs to the glycosyl hydrolase 13 family.</text>
</comment>
<keyword id="KW-0002">3D-structure</keyword>
<keyword id="KW-0106">Calcium</keyword>
<keyword id="KW-0903">Direct protein sequencing</keyword>
<keyword id="KW-1015">Disulfide bond</keyword>
<keyword id="KW-0328">Glycosyltransferase</keyword>
<keyword id="KW-0479">Metal-binding</keyword>
<keyword id="KW-0964">Secreted</keyword>
<keyword id="KW-0732">Signal</keyword>
<keyword id="KW-0808">Transferase</keyword>
<evidence type="ECO:0000250" key="1"/>
<evidence type="ECO:0000255" key="2">
    <source>
        <dbReference type="PROSITE-ProRule" id="PRU00594"/>
    </source>
</evidence>
<evidence type="ECO:0000269" key="3">
    <source ref="2"/>
</evidence>
<evidence type="ECO:0000269" key="4">
    <source ref="3"/>
</evidence>
<evidence type="ECO:0000305" key="5"/>
<evidence type="ECO:0007829" key="6">
    <source>
        <dbReference type="PDB" id="1CYG"/>
    </source>
</evidence>
<organism>
    <name type="scientific">Geobacillus stearothermophilus</name>
    <name type="common">Bacillus stearothermophilus</name>
    <dbReference type="NCBI Taxonomy" id="1422"/>
    <lineage>
        <taxon>Bacteria</taxon>
        <taxon>Bacillati</taxon>
        <taxon>Bacillota</taxon>
        <taxon>Bacilli</taxon>
        <taxon>Bacillales</taxon>
        <taxon>Anoxybacillaceae</taxon>
        <taxon>Geobacillus</taxon>
    </lineage>
</organism>
<sequence length="711" mass="78923">MRRWLSLVLSMSFVFSAIFIVSDTQKVTVEAAGNLNKVNFTSDVVYQIVVDRFVDGNTSNNPSGALFSSGCTNLRKYCGGDWQGIINKINDGYLTDMGVTAIWISQPVENVFSVMNDASGSASYHGYWARDFKKPNPFFGTLSDFQRLVDAAHAKGIKVIIDFAPNHTSPASETNPSYMENGRLYDNGTLLGGYTNDANMYFHHNGGTTFSSLEDGIYRNLFDLADLNHQNPVIDRYLKDAVKMWIDMGIDGIRMDAVKHMPFGWQKSLMDEIDNYRPVFTFGEWFLSENEVDANNHYFANESGMSLLDFRFGQKLRQVLRNNSDNWYGFNQMIQDTASAYDEVLDQVTFIDNHDMDRFMIDGGDPRKVDMALAVLLTSRGVPNIYYGTEQYMTGNGDPNNRKMMSSFNKNTRAYQVIQKLSSLRRNNPALAYGDTEQRWINGDVYVYERQFGKDVVLVAVNRSSSSNYSITGLFTALPAGTYTDQLGGLLDGNTIQVGSNGSVNAFDLGPGEVGVWAYSATESTPIIGHVGPMMGQVGHQVTIDGEGFGTNTGTVKFGTTAANVVSWSNNQIVVAVPNVSPGKYNITVQSSSGQTSAAYDNFEVLTNDQVSVRFVVNNATTNLGQNIYIVGNVYELGNWDTSKAIGPMFNQVVYSYPTWYIDVSVPEGKTIEFKFIKKDSQGNVTWESGSNHVYTTPTNTTGKIIVDWQN</sequence>
<proteinExistence type="evidence at protein level"/>
<dbReference type="EC" id="2.4.1.19"/>
<dbReference type="EMBL" id="X59042">
    <property type="protein sequence ID" value="CAA41770.1"/>
    <property type="molecule type" value="Genomic_DNA"/>
</dbReference>
<dbReference type="EMBL" id="X59043">
    <property type="protein sequence ID" value="CAA41771.1"/>
    <property type="molecule type" value="Genomic_DNA"/>
</dbReference>
<dbReference type="EMBL" id="X59044">
    <property type="protein sequence ID" value="CAA41772.1"/>
    <property type="molecule type" value="Genomic_DNA"/>
</dbReference>
<dbReference type="PIR" id="S26588">
    <property type="entry name" value="ALBSXF"/>
</dbReference>
<dbReference type="PDB" id="1CYG">
    <property type="method" value="X-ray"/>
    <property type="resolution" value="2.50 A"/>
    <property type="chains" value="A=32-711"/>
</dbReference>
<dbReference type="PDBsum" id="1CYG"/>
<dbReference type="SMR" id="P31797"/>
<dbReference type="CAZy" id="CBM20">
    <property type="family name" value="Carbohydrate-Binding Module Family 20"/>
</dbReference>
<dbReference type="CAZy" id="GH13">
    <property type="family name" value="Glycoside Hydrolase Family 13"/>
</dbReference>
<dbReference type="BRENDA" id="2.4.1.19">
    <property type="organism ID" value="623"/>
</dbReference>
<dbReference type="EvolutionaryTrace" id="P31797"/>
<dbReference type="GO" id="GO:0005576">
    <property type="term" value="C:extracellular region"/>
    <property type="evidence" value="ECO:0007669"/>
    <property type="project" value="UniProtKB-SubCell"/>
</dbReference>
<dbReference type="GO" id="GO:0004556">
    <property type="term" value="F:alpha-amylase activity"/>
    <property type="evidence" value="ECO:0007669"/>
    <property type="project" value="InterPro"/>
</dbReference>
<dbReference type="GO" id="GO:0043895">
    <property type="term" value="F:cyclomaltodextrin glucanotransferase activity"/>
    <property type="evidence" value="ECO:0007669"/>
    <property type="project" value="UniProtKB-EC"/>
</dbReference>
<dbReference type="GO" id="GO:0046872">
    <property type="term" value="F:metal ion binding"/>
    <property type="evidence" value="ECO:0007669"/>
    <property type="project" value="UniProtKB-KW"/>
</dbReference>
<dbReference type="GO" id="GO:2001070">
    <property type="term" value="F:starch binding"/>
    <property type="evidence" value="ECO:0007669"/>
    <property type="project" value="InterPro"/>
</dbReference>
<dbReference type="GO" id="GO:0005975">
    <property type="term" value="P:carbohydrate metabolic process"/>
    <property type="evidence" value="ECO:0007669"/>
    <property type="project" value="InterPro"/>
</dbReference>
<dbReference type="CDD" id="cd11320">
    <property type="entry name" value="AmyAc_AmyMalt_CGTase_like"/>
    <property type="match status" value="1"/>
</dbReference>
<dbReference type="CDD" id="cd05807">
    <property type="entry name" value="CBM20_CGTase"/>
    <property type="match status" value="1"/>
</dbReference>
<dbReference type="CDD" id="cd00604">
    <property type="entry name" value="IPT_CGTD"/>
    <property type="match status" value="1"/>
</dbReference>
<dbReference type="FunFam" id="2.60.40.10:FF:000552">
    <property type="entry name" value="Related to glucoamylase"/>
    <property type="match status" value="1"/>
</dbReference>
<dbReference type="Gene3D" id="3.20.20.80">
    <property type="entry name" value="Glycosidases"/>
    <property type="match status" value="1"/>
</dbReference>
<dbReference type="Gene3D" id="2.60.40.1180">
    <property type="entry name" value="Golgi alpha-mannosidase II"/>
    <property type="match status" value="1"/>
</dbReference>
<dbReference type="Gene3D" id="2.60.40.10">
    <property type="entry name" value="Immunoglobulins"/>
    <property type="match status" value="2"/>
</dbReference>
<dbReference type="InterPro" id="IPR006048">
    <property type="entry name" value="A-amylase/branching_C"/>
</dbReference>
<dbReference type="InterPro" id="IPR031319">
    <property type="entry name" value="A-amylase_C"/>
</dbReference>
<dbReference type="InterPro" id="IPR006046">
    <property type="entry name" value="Alpha_amylase"/>
</dbReference>
<dbReference type="InterPro" id="IPR013784">
    <property type="entry name" value="Carb-bd-like_fold"/>
</dbReference>
<dbReference type="InterPro" id="IPR002044">
    <property type="entry name" value="CBM20"/>
</dbReference>
<dbReference type="InterPro" id="IPR006047">
    <property type="entry name" value="Glyco_hydro_13_cat_dom"/>
</dbReference>
<dbReference type="InterPro" id="IPR013780">
    <property type="entry name" value="Glyco_hydro_b"/>
</dbReference>
<dbReference type="InterPro" id="IPR017853">
    <property type="entry name" value="Glycoside_hydrolase_SF"/>
</dbReference>
<dbReference type="InterPro" id="IPR013783">
    <property type="entry name" value="Ig-like_fold"/>
</dbReference>
<dbReference type="InterPro" id="IPR014756">
    <property type="entry name" value="Ig_E-set"/>
</dbReference>
<dbReference type="InterPro" id="IPR002909">
    <property type="entry name" value="IPT_dom"/>
</dbReference>
<dbReference type="PANTHER" id="PTHR10357:SF215">
    <property type="entry name" value="ALPHA-AMYLASE 1"/>
    <property type="match status" value="1"/>
</dbReference>
<dbReference type="PANTHER" id="PTHR10357">
    <property type="entry name" value="ALPHA-AMYLASE FAMILY MEMBER"/>
    <property type="match status" value="1"/>
</dbReference>
<dbReference type="Pfam" id="PF00128">
    <property type="entry name" value="Alpha-amylase"/>
    <property type="match status" value="1"/>
</dbReference>
<dbReference type="Pfam" id="PF02806">
    <property type="entry name" value="Alpha-amylase_C"/>
    <property type="match status" value="1"/>
</dbReference>
<dbReference type="Pfam" id="PF00686">
    <property type="entry name" value="CBM_20"/>
    <property type="match status" value="1"/>
</dbReference>
<dbReference type="Pfam" id="PF01833">
    <property type="entry name" value="TIG"/>
    <property type="match status" value="1"/>
</dbReference>
<dbReference type="PRINTS" id="PR00110">
    <property type="entry name" value="ALPHAAMYLASE"/>
</dbReference>
<dbReference type="SMART" id="SM00642">
    <property type="entry name" value="Aamy"/>
    <property type="match status" value="1"/>
</dbReference>
<dbReference type="SMART" id="SM00632">
    <property type="entry name" value="Aamy_C"/>
    <property type="match status" value="1"/>
</dbReference>
<dbReference type="SMART" id="SM01065">
    <property type="entry name" value="CBM_2"/>
    <property type="match status" value="1"/>
</dbReference>
<dbReference type="SUPFAM" id="SSF51445">
    <property type="entry name" value="(Trans)glycosidases"/>
    <property type="match status" value="1"/>
</dbReference>
<dbReference type="SUPFAM" id="SSF81296">
    <property type="entry name" value="E set domains"/>
    <property type="match status" value="1"/>
</dbReference>
<dbReference type="SUPFAM" id="SSF51011">
    <property type="entry name" value="Glycosyl hydrolase domain"/>
    <property type="match status" value="1"/>
</dbReference>
<dbReference type="SUPFAM" id="SSF49452">
    <property type="entry name" value="Starch-binding domain-like"/>
    <property type="match status" value="1"/>
</dbReference>
<dbReference type="PROSITE" id="PS51166">
    <property type="entry name" value="CBM20"/>
    <property type="match status" value="1"/>
</dbReference>
<gene>
    <name type="primary">cgt</name>
</gene>
<accession>P31797</accession>
<name>CDGT_GEOSE</name>
<feature type="signal peptide" evidence="3">
    <location>
        <begin position="1"/>
        <end position="31"/>
    </location>
</feature>
<feature type="chain" id="PRO_0000001442" description="Cyclomaltodextrin glucanotransferase">
    <location>
        <begin position="32"/>
        <end position="711"/>
    </location>
</feature>
<feature type="domain" description="IPT/TIG">
    <location>
        <begin position="526"/>
        <end position="604"/>
    </location>
</feature>
<feature type="domain" description="CBM20" evidence="2">
    <location>
        <begin position="605"/>
        <end position="711"/>
    </location>
</feature>
<feature type="region of interest" description="A1">
    <location>
        <begin position="32"/>
        <end position="165"/>
    </location>
</feature>
<feature type="region of interest" description="B">
    <location>
        <begin position="166"/>
        <end position="229"/>
    </location>
</feature>
<feature type="region of interest" description="A2">
    <location>
        <begin position="230"/>
        <end position="433"/>
    </location>
</feature>
<feature type="region of interest" description="C">
    <location>
        <begin position="434"/>
        <end position="522"/>
    </location>
</feature>
<feature type="region of interest" description="D">
    <location>
        <begin position="523"/>
        <end position="606"/>
    </location>
</feature>
<feature type="region of interest" description="E">
    <location>
        <begin position="607"/>
        <end position="711"/>
    </location>
</feature>
<feature type="active site" description="Nucleophile">
    <location>
        <position position="256"/>
    </location>
</feature>
<feature type="active site" description="Proton donor">
    <location>
        <position position="284"/>
    </location>
</feature>
<feature type="binding site">
    <location>
        <position position="55"/>
    </location>
    <ligand>
        <name>Ca(2+)</name>
        <dbReference type="ChEBI" id="CHEBI:29108"/>
        <label>1</label>
    </ligand>
</feature>
<feature type="binding site">
    <location>
        <position position="57"/>
    </location>
    <ligand>
        <name>Ca(2+)</name>
        <dbReference type="ChEBI" id="CHEBI:29108"/>
        <label>1</label>
    </ligand>
</feature>
<feature type="binding site">
    <location>
        <position position="60"/>
    </location>
    <ligand>
        <name>Ca(2+)</name>
        <dbReference type="ChEBI" id="CHEBI:29108"/>
        <label>1</label>
    </ligand>
</feature>
<feature type="binding site">
    <location>
        <position position="61"/>
    </location>
    <ligand>
        <name>Ca(2+)</name>
        <dbReference type="ChEBI" id="CHEBI:29108"/>
        <label>1</label>
    </ligand>
</feature>
<feature type="binding site">
    <location>
        <position position="79"/>
    </location>
    <ligand>
        <name>Ca(2+)</name>
        <dbReference type="ChEBI" id="CHEBI:29108"/>
        <label>1</label>
    </ligand>
</feature>
<feature type="binding site">
    <location>
        <position position="81"/>
    </location>
    <ligand>
        <name>Ca(2+)</name>
        <dbReference type="ChEBI" id="CHEBI:29108"/>
        <label>1</label>
    </ligand>
</feature>
<feature type="binding site" evidence="1">
    <location>
        <begin position="127"/>
        <end position="128"/>
    </location>
    <ligand>
        <name>substrate</name>
    </ligand>
</feature>
<feature type="binding site">
    <location>
        <position position="166"/>
    </location>
    <ligand>
        <name>Ca(2+)</name>
        <dbReference type="ChEBI" id="CHEBI:29108"/>
        <label>2</label>
    </ligand>
</feature>
<feature type="binding site" evidence="1">
    <location>
        <position position="167"/>
    </location>
    <ligand>
        <name>substrate</name>
    </ligand>
</feature>
<feature type="binding site">
    <location>
        <position position="217"/>
    </location>
    <ligand>
        <name>Ca(2+)</name>
        <dbReference type="ChEBI" id="CHEBI:29108"/>
        <label>2</label>
    </ligand>
</feature>
<feature type="binding site" evidence="1">
    <location>
        <begin position="220"/>
        <end position="223"/>
    </location>
    <ligand>
        <name>substrate</name>
    </ligand>
</feature>
<feature type="binding site">
    <location>
        <position position="226"/>
    </location>
    <ligand>
        <name>Ca(2+)</name>
        <dbReference type="ChEBI" id="CHEBI:29108"/>
        <label>2</label>
    </ligand>
</feature>
<feature type="binding site" evidence="1">
    <location>
        <position position="254"/>
    </location>
    <ligand>
        <name>substrate</name>
    </ligand>
</feature>
<feature type="binding site" evidence="1">
    <location>
        <begin position="259"/>
        <end position="260"/>
    </location>
    <ligand>
        <name>substrate</name>
    </ligand>
</feature>
<feature type="binding site">
    <location>
        <position position="260"/>
    </location>
    <ligand>
        <name>Ca(2+)</name>
        <dbReference type="ChEBI" id="CHEBI:29108"/>
        <label>2</label>
    </ligand>
</feature>
<feature type="binding site" evidence="1">
    <location>
        <position position="354"/>
    </location>
    <ligand>
        <name>substrate</name>
    </ligand>
</feature>
<feature type="binding site" evidence="1">
    <location>
        <position position="398"/>
    </location>
    <ligand>
        <name>substrate</name>
    </ligand>
</feature>
<feature type="binding site" evidence="1">
    <location>
        <position position="402"/>
    </location>
    <ligand>
        <name>substrate</name>
    </ligand>
</feature>
<feature type="site" description="Transition state stabilizer" evidence="1">
    <location>
        <position position="355"/>
    </location>
</feature>
<feature type="disulfide bond">
    <location>
        <begin position="71"/>
        <end position="78"/>
    </location>
</feature>
<feature type="sequence conflict" description="In Ref. 2; AA sequence." evidence="5" ref="2">
    <original>A</original>
    <variation>R</variation>
    <location>
        <position position="460"/>
    </location>
</feature>
<feature type="strand" evidence="6">
    <location>
        <begin position="45"/>
        <end position="48"/>
    </location>
</feature>
<feature type="helix" evidence="6">
    <location>
        <begin position="50"/>
        <end position="52"/>
    </location>
</feature>
<feature type="helix" evidence="6">
    <location>
        <begin position="58"/>
        <end position="60"/>
    </location>
</feature>
<feature type="helix" evidence="6">
    <location>
        <begin position="64"/>
        <end position="66"/>
    </location>
</feature>
<feature type="helix" evidence="6">
    <location>
        <begin position="69"/>
        <end position="71"/>
    </location>
</feature>
<feature type="helix" evidence="6">
    <location>
        <begin position="82"/>
        <end position="90"/>
    </location>
</feature>
<feature type="turn" evidence="6">
    <location>
        <begin position="93"/>
        <end position="98"/>
    </location>
</feature>
<feature type="strand" evidence="6">
    <location>
        <begin position="101"/>
        <end position="104"/>
    </location>
</feature>
<feature type="strand" evidence="6">
    <location>
        <begin position="108"/>
        <end position="110"/>
    </location>
</feature>
<feature type="strand" evidence="6">
    <location>
        <begin position="116"/>
        <end position="119"/>
    </location>
</feature>
<feature type="strand" evidence="6">
    <location>
        <begin position="128"/>
        <end position="135"/>
    </location>
</feature>
<feature type="turn" evidence="6">
    <location>
        <begin position="137"/>
        <end position="139"/>
    </location>
</feature>
<feature type="helix" evidence="6">
    <location>
        <begin position="142"/>
        <end position="154"/>
    </location>
</feature>
<feature type="strand" evidence="6">
    <location>
        <begin position="158"/>
        <end position="163"/>
    </location>
</feature>
<feature type="strand" evidence="6">
    <location>
        <begin position="167"/>
        <end position="170"/>
    </location>
</feature>
<feature type="turn" evidence="6">
    <location>
        <begin position="179"/>
        <end position="182"/>
    </location>
</feature>
<feature type="strand" evidence="6">
    <location>
        <begin position="184"/>
        <end position="186"/>
    </location>
</feature>
<feature type="strand" evidence="6">
    <location>
        <begin position="189"/>
        <end position="192"/>
    </location>
</feature>
<feature type="helix" evidence="6">
    <location>
        <begin position="213"/>
        <end position="217"/>
    </location>
</feature>
<feature type="strand" evidence="6">
    <location>
        <begin position="218"/>
        <end position="221"/>
    </location>
</feature>
<feature type="strand" evidence="6">
    <location>
        <begin position="224"/>
        <end position="227"/>
    </location>
</feature>
<feature type="helix" evidence="6">
    <location>
        <begin position="232"/>
        <end position="246"/>
    </location>
</feature>
<feature type="turn" evidence="6">
    <location>
        <begin position="247"/>
        <end position="249"/>
    </location>
</feature>
<feature type="strand" evidence="6">
    <location>
        <begin position="252"/>
        <end position="256"/>
    </location>
</feature>
<feature type="helix" evidence="6">
    <location>
        <begin position="258"/>
        <end position="260"/>
    </location>
</feature>
<feature type="helix" evidence="6">
    <location>
        <begin position="264"/>
        <end position="276"/>
    </location>
</feature>
<feature type="strand" evidence="6">
    <location>
        <begin position="280"/>
        <end position="283"/>
    </location>
</feature>
<feature type="helix" evidence="6">
    <location>
        <begin position="294"/>
        <end position="302"/>
    </location>
</feature>
<feature type="strand" evidence="6">
    <location>
        <begin position="306"/>
        <end position="308"/>
    </location>
</feature>
<feature type="helix" evidence="6">
    <location>
        <begin position="310"/>
        <end position="320"/>
    </location>
</feature>
<feature type="helix" evidence="6">
    <location>
        <begin position="327"/>
        <end position="340"/>
    </location>
</feature>
<feature type="helix" evidence="6">
    <location>
        <begin position="344"/>
        <end position="346"/>
    </location>
</feature>
<feature type="helix" evidence="6">
    <location>
        <begin position="367"/>
        <end position="378"/>
    </location>
</feature>
<feature type="strand" evidence="6">
    <location>
        <begin position="379"/>
        <end position="386"/>
    </location>
</feature>
<feature type="helix" evidence="6">
    <location>
        <begin position="389"/>
        <end position="391"/>
    </location>
</feature>
<feature type="helix" evidence="6">
    <location>
        <begin position="400"/>
        <end position="402"/>
    </location>
</feature>
<feature type="helix" evidence="6">
    <location>
        <begin position="413"/>
        <end position="427"/>
    </location>
</feature>
<feature type="helix" evidence="6">
    <location>
        <begin position="429"/>
        <end position="433"/>
    </location>
</feature>
<feature type="strand" evidence="6">
    <location>
        <begin position="435"/>
        <end position="441"/>
    </location>
</feature>
<feature type="strand" evidence="6">
    <location>
        <begin position="443"/>
        <end position="452"/>
    </location>
</feature>
<feature type="strand" evidence="6">
    <location>
        <begin position="455"/>
        <end position="462"/>
    </location>
</feature>
<feature type="strand" evidence="6">
    <location>
        <begin position="469"/>
        <end position="471"/>
    </location>
</feature>
<feature type="strand" evidence="6">
    <location>
        <begin position="480"/>
        <end position="483"/>
    </location>
</feature>
<feature type="turn" evidence="6">
    <location>
        <begin position="486"/>
        <end position="491"/>
    </location>
</feature>
<feature type="strand" evidence="6">
    <location>
        <begin position="496"/>
        <end position="498"/>
    </location>
</feature>
<feature type="helix" evidence="6">
    <location>
        <begin position="500"/>
        <end position="502"/>
    </location>
</feature>
<feature type="strand" evidence="6">
    <location>
        <begin position="507"/>
        <end position="509"/>
    </location>
</feature>
<feature type="strand" evidence="6">
    <location>
        <begin position="514"/>
        <end position="519"/>
    </location>
</feature>
<feature type="strand" evidence="6">
    <location>
        <begin position="527"/>
        <end position="532"/>
    </location>
</feature>
<feature type="strand" evidence="6">
    <location>
        <begin position="534"/>
        <end position="536"/>
    </location>
</feature>
<feature type="strand" evidence="6">
    <location>
        <begin position="541"/>
        <end position="547"/>
    </location>
</feature>
<feature type="strand" evidence="6">
    <location>
        <begin position="555"/>
        <end position="558"/>
    </location>
</feature>
<feature type="strand" evidence="6">
    <location>
        <begin position="565"/>
        <end position="567"/>
    </location>
</feature>
<feature type="strand" evidence="6">
    <location>
        <begin position="570"/>
        <end position="576"/>
    </location>
</feature>
<feature type="strand" evidence="6">
    <location>
        <begin position="582"/>
        <end position="590"/>
    </location>
</feature>
<feature type="strand" evidence="6">
    <location>
        <begin position="600"/>
        <end position="605"/>
    </location>
</feature>
<feature type="strand" evidence="6">
    <location>
        <begin position="610"/>
        <end position="619"/>
    </location>
</feature>
<feature type="strand" evidence="6">
    <location>
        <begin position="627"/>
        <end position="634"/>
    </location>
</feature>
<feature type="helix" evidence="6">
    <location>
        <begin position="635"/>
        <end position="637"/>
    </location>
</feature>
<feature type="helix" evidence="6">
    <location>
        <begin position="642"/>
        <end position="644"/>
    </location>
</feature>
<feature type="strand" evidence="6">
    <location>
        <begin position="652"/>
        <end position="655"/>
    </location>
</feature>
<feature type="strand" evidence="6">
    <location>
        <begin position="660"/>
        <end position="669"/>
    </location>
</feature>
<feature type="strand" evidence="6">
    <location>
        <begin position="671"/>
        <end position="679"/>
    </location>
</feature>
<feature type="strand" evidence="6">
    <location>
        <begin position="685"/>
        <end position="687"/>
    </location>
</feature>
<feature type="strand" evidence="6">
    <location>
        <begin position="693"/>
        <end position="696"/>
    </location>
</feature>
<feature type="strand" evidence="6">
    <location>
        <begin position="699"/>
        <end position="701"/>
    </location>
</feature>
<feature type="strand" evidence="6">
    <location>
        <begin position="703"/>
        <end position="708"/>
    </location>
</feature>
<protein>
    <recommendedName>
        <fullName>Cyclomaltodextrin glucanotransferase</fullName>
        <ecNumber>2.4.1.19</ecNumber>
    </recommendedName>
    <alternativeName>
        <fullName>Cyclodextrin-glycosyltransferase</fullName>
        <shortName>CGTase</shortName>
    </alternativeName>
</protein>